<evidence type="ECO:0000255" key="1">
    <source>
        <dbReference type="HAMAP-Rule" id="MF_00021"/>
    </source>
</evidence>
<dbReference type="EC" id="2.8.1.4" evidence="1"/>
<dbReference type="EMBL" id="CP000026">
    <property type="protein sequence ID" value="AAV78183.1"/>
    <property type="molecule type" value="Genomic_DNA"/>
</dbReference>
<dbReference type="RefSeq" id="WP_000668648.1">
    <property type="nucleotide sequence ID" value="NC_006511.1"/>
</dbReference>
<dbReference type="SMR" id="Q5PFQ4"/>
<dbReference type="KEGG" id="spt:SPA2298"/>
<dbReference type="HOGENOM" id="CLU_037952_4_1_6"/>
<dbReference type="UniPathway" id="UPA00060"/>
<dbReference type="Proteomes" id="UP000008185">
    <property type="component" value="Chromosome"/>
</dbReference>
<dbReference type="GO" id="GO:0005829">
    <property type="term" value="C:cytosol"/>
    <property type="evidence" value="ECO:0007669"/>
    <property type="project" value="TreeGrafter"/>
</dbReference>
<dbReference type="GO" id="GO:0005524">
    <property type="term" value="F:ATP binding"/>
    <property type="evidence" value="ECO:0007669"/>
    <property type="project" value="UniProtKB-UniRule"/>
</dbReference>
<dbReference type="GO" id="GO:0004810">
    <property type="term" value="F:CCA tRNA nucleotidyltransferase activity"/>
    <property type="evidence" value="ECO:0007669"/>
    <property type="project" value="InterPro"/>
</dbReference>
<dbReference type="GO" id="GO:0000049">
    <property type="term" value="F:tRNA binding"/>
    <property type="evidence" value="ECO:0007669"/>
    <property type="project" value="UniProtKB-UniRule"/>
</dbReference>
<dbReference type="GO" id="GO:0140741">
    <property type="term" value="F:tRNA-uracil-4 sulfurtransferase activity"/>
    <property type="evidence" value="ECO:0007669"/>
    <property type="project" value="UniProtKB-EC"/>
</dbReference>
<dbReference type="GO" id="GO:0009228">
    <property type="term" value="P:thiamine biosynthetic process"/>
    <property type="evidence" value="ECO:0007669"/>
    <property type="project" value="UniProtKB-KW"/>
</dbReference>
<dbReference type="GO" id="GO:0009229">
    <property type="term" value="P:thiamine diphosphate biosynthetic process"/>
    <property type="evidence" value="ECO:0007669"/>
    <property type="project" value="UniProtKB-UniRule"/>
</dbReference>
<dbReference type="GO" id="GO:0052837">
    <property type="term" value="P:thiazole biosynthetic process"/>
    <property type="evidence" value="ECO:0007669"/>
    <property type="project" value="InterPro"/>
</dbReference>
<dbReference type="GO" id="GO:0002937">
    <property type="term" value="P:tRNA 4-thiouridine biosynthesis"/>
    <property type="evidence" value="ECO:0007669"/>
    <property type="project" value="TreeGrafter"/>
</dbReference>
<dbReference type="CDD" id="cd01712">
    <property type="entry name" value="PPase_ThiI"/>
    <property type="match status" value="1"/>
</dbReference>
<dbReference type="CDD" id="cd00158">
    <property type="entry name" value="RHOD"/>
    <property type="match status" value="1"/>
</dbReference>
<dbReference type="CDD" id="cd11716">
    <property type="entry name" value="THUMP_ThiI"/>
    <property type="match status" value="1"/>
</dbReference>
<dbReference type="FunFam" id="3.30.2130.30:FF:000002">
    <property type="entry name" value="tRNA sulfurtransferase"/>
    <property type="match status" value="1"/>
</dbReference>
<dbReference type="FunFam" id="3.40.250.10:FF:000003">
    <property type="entry name" value="tRNA sulfurtransferase"/>
    <property type="match status" value="1"/>
</dbReference>
<dbReference type="FunFam" id="3.40.50.620:FF:000029">
    <property type="entry name" value="tRNA sulfurtransferase"/>
    <property type="match status" value="1"/>
</dbReference>
<dbReference type="Gene3D" id="3.30.2130.30">
    <property type="match status" value="1"/>
</dbReference>
<dbReference type="Gene3D" id="3.40.50.620">
    <property type="entry name" value="HUPs"/>
    <property type="match status" value="1"/>
</dbReference>
<dbReference type="Gene3D" id="3.40.250.10">
    <property type="entry name" value="Rhodanese-like domain"/>
    <property type="match status" value="1"/>
</dbReference>
<dbReference type="HAMAP" id="MF_00021">
    <property type="entry name" value="ThiI"/>
    <property type="match status" value="1"/>
</dbReference>
<dbReference type="InterPro" id="IPR001763">
    <property type="entry name" value="Rhodanese-like_dom"/>
</dbReference>
<dbReference type="InterPro" id="IPR036873">
    <property type="entry name" value="Rhodanese-like_dom_sf"/>
</dbReference>
<dbReference type="InterPro" id="IPR014729">
    <property type="entry name" value="Rossmann-like_a/b/a_fold"/>
</dbReference>
<dbReference type="InterPro" id="IPR020536">
    <property type="entry name" value="ThiI_AANH"/>
</dbReference>
<dbReference type="InterPro" id="IPR054173">
    <property type="entry name" value="ThiI_fer"/>
</dbReference>
<dbReference type="InterPro" id="IPR049961">
    <property type="entry name" value="ThiI_N"/>
</dbReference>
<dbReference type="InterPro" id="IPR026340">
    <property type="entry name" value="THII_Thiazole_biosynth_dom"/>
</dbReference>
<dbReference type="InterPro" id="IPR004114">
    <property type="entry name" value="THUMP_dom"/>
</dbReference>
<dbReference type="InterPro" id="IPR049962">
    <property type="entry name" value="THUMP_ThiI"/>
</dbReference>
<dbReference type="InterPro" id="IPR003720">
    <property type="entry name" value="tRNA_STrfase"/>
</dbReference>
<dbReference type="InterPro" id="IPR050102">
    <property type="entry name" value="tRNA_sulfurtransferase_ThiI"/>
</dbReference>
<dbReference type="NCBIfam" id="TIGR04271">
    <property type="entry name" value="ThiI_C_thiazole"/>
    <property type="match status" value="1"/>
</dbReference>
<dbReference type="NCBIfam" id="TIGR00342">
    <property type="entry name" value="tRNA uracil 4-sulfurtransferase ThiI"/>
    <property type="match status" value="1"/>
</dbReference>
<dbReference type="PANTHER" id="PTHR43209">
    <property type="entry name" value="TRNA SULFURTRANSFERASE"/>
    <property type="match status" value="1"/>
</dbReference>
<dbReference type="PANTHER" id="PTHR43209:SF1">
    <property type="entry name" value="TRNA SULFURTRANSFERASE"/>
    <property type="match status" value="1"/>
</dbReference>
<dbReference type="Pfam" id="PF02568">
    <property type="entry name" value="ThiI"/>
    <property type="match status" value="1"/>
</dbReference>
<dbReference type="Pfam" id="PF22025">
    <property type="entry name" value="ThiI_fer"/>
    <property type="match status" value="1"/>
</dbReference>
<dbReference type="Pfam" id="PF02926">
    <property type="entry name" value="THUMP"/>
    <property type="match status" value="1"/>
</dbReference>
<dbReference type="SMART" id="SM00981">
    <property type="entry name" value="THUMP"/>
    <property type="match status" value="1"/>
</dbReference>
<dbReference type="SUPFAM" id="SSF52402">
    <property type="entry name" value="Adenine nucleotide alpha hydrolases-like"/>
    <property type="match status" value="1"/>
</dbReference>
<dbReference type="SUPFAM" id="SSF52821">
    <property type="entry name" value="Rhodanese/Cell cycle control phosphatase"/>
    <property type="match status" value="1"/>
</dbReference>
<dbReference type="SUPFAM" id="SSF143437">
    <property type="entry name" value="THUMP domain-like"/>
    <property type="match status" value="1"/>
</dbReference>
<dbReference type="PROSITE" id="PS50206">
    <property type="entry name" value="RHODANESE_3"/>
    <property type="match status" value="1"/>
</dbReference>
<dbReference type="PROSITE" id="PS51165">
    <property type="entry name" value="THUMP"/>
    <property type="match status" value="1"/>
</dbReference>
<proteinExistence type="inferred from homology"/>
<keyword id="KW-0067">ATP-binding</keyword>
<keyword id="KW-0963">Cytoplasm</keyword>
<keyword id="KW-1015">Disulfide bond</keyword>
<keyword id="KW-0547">Nucleotide-binding</keyword>
<keyword id="KW-0676">Redox-active center</keyword>
<keyword id="KW-0694">RNA-binding</keyword>
<keyword id="KW-0784">Thiamine biosynthesis</keyword>
<keyword id="KW-0808">Transferase</keyword>
<keyword id="KW-0820">tRNA-binding</keyword>
<feature type="chain" id="PRO_1000074259" description="tRNA sulfurtransferase">
    <location>
        <begin position="1"/>
        <end position="482"/>
    </location>
</feature>
<feature type="domain" description="THUMP" evidence="1">
    <location>
        <begin position="61"/>
        <end position="165"/>
    </location>
</feature>
<feature type="domain" description="Rhodanese" evidence="1">
    <location>
        <begin position="404"/>
        <end position="482"/>
    </location>
</feature>
<feature type="active site" description="Cysteine persulfide intermediate" evidence="1">
    <location>
        <position position="456"/>
    </location>
</feature>
<feature type="binding site" evidence="1">
    <location>
        <begin position="183"/>
        <end position="184"/>
    </location>
    <ligand>
        <name>ATP</name>
        <dbReference type="ChEBI" id="CHEBI:30616"/>
    </ligand>
</feature>
<feature type="binding site" evidence="1">
    <location>
        <position position="265"/>
    </location>
    <ligand>
        <name>ATP</name>
        <dbReference type="ChEBI" id="CHEBI:30616"/>
    </ligand>
</feature>
<feature type="binding site" evidence="1">
    <location>
        <position position="287"/>
    </location>
    <ligand>
        <name>ATP</name>
        <dbReference type="ChEBI" id="CHEBI:30616"/>
    </ligand>
</feature>
<feature type="binding site" evidence="1">
    <location>
        <position position="296"/>
    </location>
    <ligand>
        <name>ATP</name>
        <dbReference type="ChEBI" id="CHEBI:30616"/>
    </ligand>
</feature>
<feature type="disulfide bond" description="Redox-active" evidence="1">
    <location>
        <begin position="344"/>
        <end position="456"/>
    </location>
</feature>
<protein>
    <recommendedName>
        <fullName evidence="1">tRNA sulfurtransferase</fullName>
        <ecNumber evidence="1">2.8.1.4</ecNumber>
    </recommendedName>
    <alternativeName>
        <fullName evidence="1">Sulfur carrier protein ThiS sulfurtransferase</fullName>
    </alternativeName>
    <alternativeName>
        <fullName evidence="1">Thiamine biosynthesis protein ThiI</fullName>
    </alternativeName>
    <alternativeName>
        <fullName evidence="1">tRNA 4-thiouridine synthase</fullName>
    </alternativeName>
</protein>
<name>THII_SALPA</name>
<comment type="function">
    <text evidence="1">Catalyzes the ATP-dependent transfer of a sulfur to tRNA to produce 4-thiouridine in position 8 of tRNAs, which functions as a near-UV photosensor. Also catalyzes the transfer of sulfur to the sulfur carrier protein ThiS, forming ThiS-thiocarboxylate. This is a step in the synthesis of thiazole, in the thiamine biosynthesis pathway. The sulfur is donated as persulfide by IscS.</text>
</comment>
<comment type="catalytic activity">
    <reaction evidence="1">
        <text>[ThiI sulfur-carrier protein]-S-sulfanyl-L-cysteine + a uridine in tRNA + 2 reduced [2Fe-2S]-[ferredoxin] + ATP + H(+) = [ThiI sulfur-carrier protein]-L-cysteine + a 4-thiouridine in tRNA + 2 oxidized [2Fe-2S]-[ferredoxin] + AMP + diphosphate</text>
        <dbReference type="Rhea" id="RHEA:24176"/>
        <dbReference type="Rhea" id="RHEA-COMP:10000"/>
        <dbReference type="Rhea" id="RHEA-COMP:10001"/>
        <dbReference type="Rhea" id="RHEA-COMP:13337"/>
        <dbReference type="Rhea" id="RHEA-COMP:13338"/>
        <dbReference type="Rhea" id="RHEA-COMP:13339"/>
        <dbReference type="Rhea" id="RHEA-COMP:13340"/>
        <dbReference type="ChEBI" id="CHEBI:15378"/>
        <dbReference type="ChEBI" id="CHEBI:29950"/>
        <dbReference type="ChEBI" id="CHEBI:30616"/>
        <dbReference type="ChEBI" id="CHEBI:33019"/>
        <dbReference type="ChEBI" id="CHEBI:33737"/>
        <dbReference type="ChEBI" id="CHEBI:33738"/>
        <dbReference type="ChEBI" id="CHEBI:61963"/>
        <dbReference type="ChEBI" id="CHEBI:65315"/>
        <dbReference type="ChEBI" id="CHEBI:136798"/>
        <dbReference type="ChEBI" id="CHEBI:456215"/>
        <dbReference type="EC" id="2.8.1.4"/>
    </reaction>
</comment>
<comment type="catalytic activity">
    <reaction evidence="1">
        <text>[ThiS sulfur-carrier protein]-C-terminal Gly-Gly-AMP + S-sulfanyl-L-cysteinyl-[cysteine desulfurase] + AH2 = [ThiS sulfur-carrier protein]-C-terminal-Gly-aminoethanethioate + L-cysteinyl-[cysteine desulfurase] + A + AMP + 2 H(+)</text>
        <dbReference type="Rhea" id="RHEA:43340"/>
        <dbReference type="Rhea" id="RHEA-COMP:12157"/>
        <dbReference type="Rhea" id="RHEA-COMP:12158"/>
        <dbReference type="Rhea" id="RHEA-COMP:12910"/>
        <dbReference type="Rhea" id="RHEA-COMP:19908"/>
        <dbReference type="ChEBI" id="CHEBI:13193"/>
        <dbReference type="ChEBI" id="CHEBI:15378"/>
        <dbReference type="ChEBI" id="CHEBI:17499"/>
        <dbReference type="ChEBI" id="CHEBI:29950"/>
        <dbReference type="ChEBI" id="CHEBI:61963"/>
        <dbReference type="ChEBI" id="CHEBI:90618"/>
        <dbReference type="ChEBI" id="CHEBI:232372"/>
        <dbReference type="ChEBI" id="CHEBI:456215"/>
    </reaction>
</comment>
<comment type="pathway">
    <text evidence="1">Cofactor biosynthesis; thiamine diphosphate biosynthesis.</text>
</comment>
<comment type="subcellular location">
    <subcellularLocation>
        <location evidence="1">Cytoplasm</location>
    </subcellularLocation>
</comment>
<comment type="similarity">
    <text evidence="1">Belongs to the ThiI family.</text>
</comment>
<reference key="1">
    <citation type="journal article" date="2004" name="Nat. Genet.">
        <title>Comparison of genome degradation in Paratyphi A and Typhi, human-restricted serovars of Salmonella enterica that cause typhoid.</title>
        <authorList>
            <person name="McClelland M."/>
            <person name="Sanderson K.E."/>
            <person name="Clifton S.W."/>
            <person name="Latreille P."/>
            <person name="Porwollik S."/>
            <person name="Sabo A."/>
            <person name="Meyer R."/>
            <person name="Bieri T."/>
            <person name="Ozersky P."/>
            <person name="McLellan M."/>
            <person name="Harkins C.R."/>
            <person name="Wang C."/>
            <person name="Nguyen C."/>
            <person name="Berghoff A."/>
            <person name="Elliott G."/>
            <person name="Kohlberg S."/>
            <person name="Strong C."/>
            <person name="Du F."/>
            <person name="Carter J."/>
            <person name="Kremizki C."/>
            <person name="Layman D."/>
            <person name="Leonard S."/>
            <person name="Sun H."/>
            <person name="Fulton L."/>
            <person name="Nash W."/>
            <person name="Miner T."/>
            <person name="Minx P."/>
            <person name="Delehaunty K."/>
            <person name="Fronick C."/>
            <person name="Magrini V."/>
            <person name="Nhan M."/>
            <person name="Warren W."/>
            <person name="Florea L."/>
            <person name="Spieth J."/>
            <person name="Wilson R.K."/>
        </authorList>
    </citation>
    <scope>NUCLEOTIDE SEQUENCE [LARGE SCALE GENOMIC DNA]</scope>
    <source>
        <strain>ATCC 9150 / SARB42</strain>
    </source>
</reference>
<organism>
    <name type="scientific">Salmonella paratyphi A (strain ATCC 9150 / SARB42)</name>
    <dbReference type="NCBI Taxonomy" id="295319"/>
    <lineage>
        <taxon>Bacteria</taxon>
        <taxon>Pseudomonadati</taxon>
        <taxon>Pseudomonadota</taxon>
        <taxon>Gammaproteobacteria</taxon>
        <taxon>Enterobacterales</taxon>
        <taxon>Enterobacteriaceae</taxon>
        <taxon>Salmonella</taxon>
    </lineage>
</organism>
<sequence>MKFIIKLFPEITIKSQSVRLRFIKILTGNIRNVLKHYDETLAVVRHWDNIEVRAKDENQRLAIRDALTRIPGIHHILEVEDVPFTDMHDIFEKALAQYREQLEGKTFCVRVKRRGKHEFSSIEVERYVGGGLNQHIESARVKLTNPDVTVHLEVEDDRLLLIKGRYEGIGGFPIGTQEDVLSLISGGFDSGVSSYMLMRRGCRVHYCFFNLGGAAHEIGVRQVAHYLWNRFGSSHRVRFVAINFEPVVGEILEKVDDGQMGVVLKRMMVRAASKVAERYGVQALVTGEALGQVSSQTLTNLRLIDNVSDTLILRPLISYDKEHIINLARQIGTEDFARTMPEYCGVISKSPTVKAIKAKIEAEEENFDFSILDKVVEEANNVDIREIAQQTQQEVVEVETVSGFGANDVILDIRSVDEQDDKPLKVEGVDVVSLPFYKLSTKFGDLDQSKTWLLWCERGVMSRLQALYLREQGFANVKVYRP</sequence>
<accession>Q5PFQ4</accession>
<gene>
    <name evidence="1" type="primary">thiI</name>
    <name type="ordered locus">SPA2298</name>
</gene>